<name>DRE1_PSEMZ</name>
<sequence>KPAGRKKFQETRHPIYRGVRLRKSGKWVCEVREPNKKSRIWLGTFK</sequence>
<proteinExistence type="evidence at protein level"/>
<dbReference type="SMR" id="P85955"/>
<dbReference type="GO" id="GO:0005634">
    <property type="term" value="C:nucleus"/>
    <property type="evidence" value="ECO:0007669"/>
    <property type="project" value="UniProtKB-SubCell"/>
</dbReference>
<dbReference type="GO" id="GO:0003677">
    <property type="term" value="F:DNA binding"/>
    <property type="evidence" value="ECO:0007669"/>
    <property type="project" value="UniProtKB-KW"/>
</dbReference>
<dbReference type="GO" id="GO:0003700">
    <property type="term" value="F:DNA-binding transcription factor activity"/>
    <property type="evidence" value="ECO:0007669"/>
    <property type="project" value="InterPro"/>
</dbReference>
<dbReference type="Gene3D" id="3.30.730.10">
    <property type="entry name" value="AP2/ERF domain"/>
    <property type="match status" value="1"/>
</dbReference>
<dbReference type="InterPro" id="IPR001471">
    <property type="entry name" value="AP2/ERF_dom"/>
</dbReference>
<dbReference type="InterPro" id="IPR036955">
    <property type="entry name" value="AP2/ERF_dom_sf"/>
</dbReference>
<dbReference type="InterPro" id="IPR016177">
    <property type="entry name" value="DNA-bd_dom_sf"/>
</dbReference>
<dbReference type="InterPro" id="IPR045277">
    <property type="entry name" value="DRE1A-I"/>
</dbReference>
<dbReference type="PANTHER" id="PTHR31839:SF23">
    <property type="entry name" value="DEHYDRATION-RESPONSIVE ELEMENT-BINDING PROTEIN 1A-RELATED"/>
    <property type="match status" value="1"/>
</dbReference>
<dbReference type="PANTHER" id="PTHR31839">
    <property type="entry name" value="DEHYDRATION-RESPONSIVE ELEMENT-BINDING PROTEIN 1D"/>
    <property type="match status" value="1"/>
</dbReference>
<dbReference type="Pfam" id="PF00847">
    <property type="entry name" value="AP2"/>
    <property type="match status" value="1"/>
</dbReference>
<dbReference type="PRINTS" id="PR00367">
    <property type="entry name" value="ETHRSPELEMNT"/>
</dbReference>
<dbReference type="SMART" id="SM00380">
    <property type="entry name" value="AP2"/>
    <property type="match status" value="1"/>
</dbReference>
<dbReference type="SUPFAM" id="SSF54171">
    <property type="entry name" value="DNA-binding domain"/>
    <property type="match status" value="1"/>
</dbReference>
<dbReference type="PROSITE" id="PS51032">
    <property type="entry name" value="AP2_ERF"/>
    <property type="match status" value="1"/>
</dbReference>
<feature type="chain" id="PRO_0000392469" description="Dehydration-responsive element-binding protein 1">
    <location>
        <begin position="1" status="less than"/>
        <end position="46" status="greater than"/>
    </location>
</feature>
<feature type="DNA-binding region" description="AP2/ERF" evidence="4">
    <location>
        <begin position="15"/>
        <end position="46" status="greater than"/>
    </location>
</feature>
<feature type="non-terminal residue" evidence="5">
    <location>
        <position position="1"/>
    </location>
</feature>
<feature type="non-terminal residue" evidence="5">
    <location>
        <position position="46"/>
    </location>
</feature>
<evidence type="ECO:0000250" key="1"/>
<evidence type="ECO:0000250" key="2">
    <source>
        <dbReference type="UniProtKB" id="Q9M0L0"/>
    </source>
</evidence>
<evidence type="ECO:0000255" key="3"/>
<evidence type="ECO:0000255" key="4">
    <source>
        <dbReference type="PROSITE-ProRule" id="PRU00366"/>
    </source>
</evidence>
<evidence type="ECO:0000303" key="5">
    <source>
    </source>
</evidence>
<evidence type="ECO:0000305" key="6"/>
<protein>
    <recommendedName>
        <fullName evidence="2">Dehydration-responsive element-binding protein 1</fullName>
        <shortName evidence="2">Protein DREB1</shortName>
    </recommendedName>
</protein>
<organism>
    <name type="scientific">Pseudotsuga menziesii</name>
    <name type="common">Douglas-fir</name>
    <name type="synonym">Abies menziesii</name>
    <dbReference type="NCBI Taxonomy" id="3357"/>
    <lineage>
        <taxon>Eukaryota</taxon>
        <taxon>Viridiplantae</taxon>
        <taxon>Streptophyta</taxon>
        <taxon>Embryophyta</taxon>
        <taxon>Tracheophyta</taxon>
        <taxon>Spermatophyta</taxon>
        <taxon>Pinopsida</taxon>
        <taxon>Pinidae</taxon>
        <taxon>Conifers I</taxon>
        <taxon>Pinales</taxon>
        <taxon>Pinaceae</taxon>
        <taxon>Pseudotsuga</taxon>
    </lineage>
</organism>
<reference key="1">
    <citation type="journal article" date="2008" name="J. Proteomics">
        <title>A proteomics approach to identify proteins differentially expressed in Douglas-fir seedlings infected by Phellinus sulphurascens.</title>
        <authorList>
            <person name="Islam M.A."/>
            <person name="Sturrock R.N."/>
            <person name="Ekramoddoullah A.K.M."/>
        </authorList>
    </citation>
    <scope>IDENTIFICATION BY MASS SPECTROMETRY</scope>
</reference>
<comment type="function">
    <text evidence="1">Transcriptional activator that binds specifically to the DNA sequence 5'-[AG]CCGAC-3'.</text>
</comment>
<comment type="subcellular location">
    <subcellularLocation>
        <location evidence="3 6">Nucleus</location>
    </subcellularLocation>
</comment>
<comment type="similarity">
    <text evidence="3">Belongs to the AP2/ERF transcription factor family. ERF subfamily.</text>
</comment>
<keyword id="KW-0010">Activator</keyword>
<keyword id="KW-0238">DNA-binding</keyword>
<keyword id="KW-0539">Nucleus</keyword>
<keyword id="KW-0346">Stress response</keyword>
<keyword id="KW-0804">Transcription</keyword>
<keyword id="KW-0805">Transcription regulation</keyword>
<accession>P85955</accession>